<organism>
    <name type="scientific">Drosophila miranda</name>
    <name type="common">Fruit fly</name>
    <dbReference type="NCBI Taxonomy" id="7229"/>
    <lineage>
        <taxon>Eukaryota</taxon>
        <taxon>Metazoa</taxon>
        <taxon>Ecdysozoa</taxon>
        <taxon>Arthropoda</taxon>
        <taxon>Hexapoda</taxon>
        <taxon>Insecta</taxon>
        <taxon>Pterygota</taxon>
        <taxon>Neoptera</taxon>
        <taxon>Endopterygota</taxon>
        <taxon>Diptera</taxon>
        <taxon>Brachycera</taxon>
        <taxon>Muscomorpha</taxon>
        <taxon>Ephydroidea</taxon>
        <taxon>Drosophilidae</taxon>
        <taxon>Drosophila</taxon>
        <taxon>Sophophora</taxon>
    </lineage>
</organism>
<proteinExistence type="inferred from homology"/>
<keyword id="KW-0687">Ribonucleoprotein</keyword>
<keyword id="KW-0689">Ribosomal protein</keyword>
<evidence type="ECO:0000305" key="1"/>
<comment type="similarity">
    <text evidence="1">Belongs to the eukaryotic ribosomal protein eL32 family.</text>
</comment>
<protein>
    <recommendedName>
        <fullName evidence="1">Large ribosomal subunit protein eL32</fullName>
    </recommendedName>
    <alternativeName>
        <fullName>60S ribosomal protein L32</fullName>
    </alternativeName>
    <alternativeName>
        <fullName>Ribosomal protein 49</fullName>
    </alternativeName>
</protein>
<name>RL32_DROMI</name>
<reference key="1">
    <citation type="journal article" date="1998" name="Mol. Phylogenet. Evol.">
        <title>Molecular and chromosomal phylogeny in the obscura group of Drosophila inferred from sequences of the rp49 gene region.</title>
        <authorList>
            <person name="Ramos-Onsins S."/>
            <person name="Segarra C."/>
            <person name="Rozas J."/>
            <person name="Aguade M."/>
        </authorList>
    </citation>
    <scope>NUCLEOTIDE SEQUENCE [GENOMIC DNA]</scope>
</reference>
<reference key="2">
    <citation type="journal article" date="2005" name="Genetics">
        <title>Patterns of selection on synonymous and nonsynonymous variants in Drosophila miranda.</title>
        <authorList>
            <person name="Bartolome C."/>
            <person name="Maside X."/>
            <person name="Yi S."/>
            <person name="Grant A.L."/>
            <person name="Charlesworth B."/>
        </authorList>
    </citation>
    <scope>NUCLEOTIDE SEQUENCE [GENOMIC DNA]</scope>
    <source>
        <strain>MSH22</strain>
    </source>
</reference>
<gene>
    <name type="primary">RpL32</name>
    <name type="synonym">rp49</name>
</gene>
<dbReference type="EMBL" id="Y09709">
    <property type="protein sequence ID" value="CAA70880.1"/>
    <property type="molecule type" value="Genomic_DNA"/>
</dbReference>
<dbReference type="EMBL" id="AY754569">
    <property type="protein sequence ID" value="AAX13144.1"/>
    <property type="molecule type" value="Genomic_DNA"/>
</dbReference>
<dbReference type="SMR" id="P84326"/>
<dbReference type="EnsemblMetazoa" id="XM_017287866.2">
    <property type="protein sequence ID" value="XP_017143355.1"/>
    <property type="gene ID" value="LOC108156419"/>
</dbReference>
<dbReference type="GeneID" id="108156419"/>
<dbReference type="KEGG" id="dmn:108156419"/>
<dbReference type="CTD" id="6161"/>
<dbReference type="OMA" id="HPSGYEE"/>
<dbReference type="OrthoDB" id="7416at7215"/>
<dbReference type="GO" id="GO:0022625">
    <property type="term" value="C:cytosolic large ribosomal subunit"/>
    <property type="evidence" value="ECO:0007669"/>
    <property type="project" value="TreeGrafter"/>
</dbReference>
<dbReference type="GO" id="GO:0003735">
    <property type="term" value="F:structural constituent of ribosome"/>
    <property type="evidence" value="ECO:0007669"/>
    <property type="project" value="InterPro"/>
</dbReference>
<dbReference type="GO" id="GO:0006412">
    <property type="term" value="P:translation"/>
    <property type="evidence" value="ECO:0007669"/>
    <property type="project" value="InterPro"/>
</dbReference>
<dbReference type="CDD" id="cd00513">
    <property type="entry name" value="Ribosomal_L32_L32e"/>
    <property type="match status" value="1"/>
</dbReference>
<dbReference type="InterPro" id="IPR001515">
    <property type="entry name" value="Ribosomal_eL32"/>
</dbReference>
<dbReference type="InterPro" id="IPR018263">
    <property type="entry name" value="Ribosomal_eL32_CS"/>
</dbReference>
<dbReference type="InterPro" id="IPR036351">
    <property type="entry name" value="Ribosomal_eL32_sf"/>
</dbReference>
<dbReference type="PANTHER" id="PTHR23413">
    <property type="entry name" value="60S RIBOSOMAL PROTEIN L32 AND DNA-DIRECTED RNA POLYMERASE II, SUBUNIT N"/>
    <property type="match status" value="1"/>
</dbReference>
<dbReference type="PANTHER" id="PTHR23413:SF1">
    <property type="entry name" value="RIBOSOMAL PROTEIN L32"/>
    <property type="match status" value="1"/>
</dbReference>
<dbReference type="Pfam" id="PF01655">
    <property type="entry name" value="Ribosomal_L32e"/>
    <property type="match status" value="1"/>
</dbReference>
<dbReference type="SMART" id="SM01393">
    <property type="entry name" value="Ribosomal_L32e"/>
    <property type="match status" value="1"/>
</dbReference>
<dbReference type="SUPFAM" id="SSF52042">
    <property type="entry name" value="Ribosomal protein L32e"/>
    <property type="match status" value="1"/>
</dbReference>
<dbReference type="PROSITE" id="PS00580">
    <property type="entry name" value="RIBOSOMAL_L32E"/>
    <property type="match status" value="1"/>
</dbReference>
<sequence>MTIRPAYRPKIIKKRTKHFIRHQSDRYAKLSHKWRKPKGIDNRVRRRFKGQYLMPNIGYGSNKRTRHMLPTGFKKFLVHNVRELEVLLMQNRVYCGEIAHAVSSKKRKEIVERAKQLSIRLTNPNGRLRSQENE</sequence>
<accession>P84326</accession>
<accession>P46615</accession>
<accession>Q56RD8</accession>
<feature type="chain" id="PRO_0000131129" description="Large ribosomal subunit protein eL32">
    <location>
        <begin position="1"/>
        <end position="134"/>
    </location>
</feature>